<sequence>MKTEIHPNYKAAKISCASCGTVYETRTSIGDINIEICSACHPFFTGKSKLVDTTGRVDKFKKKYKMQ</sequence>
<feature type="chain" id="PRO_1000126652" description="Large ribosomal subunit protein bL31">
    <location>
        <begin position="1"/>
        <end position="67"/>
    </location>
</feature>
<protein>
    <recommendedName>
        <fullName evidence="1">Large ribosomal subunit protein bL31</fullName>
    </recommendedName>
    <alternativeName>
        <fullName evidence="2">50S ribosomal protein L31</fullName>
    </alternativeName>
</protein>
<accession>Q04YV5</accession>
<gene>
    <name evidence="1" type="primary">rpmE</name>
    <name type="ordered locus">LBL_2352</name>
</gene>
<evidence type="ECO:0000255" key="1">
    <source>
        <dbReference type="HAMAP-Rule" id="MF_00501"/>
    </source>
</evidence>
<evidence type="ECO:0000305" key="2"/>
<comment type="function">
    <text evidence="1">Binds the 23S rRNA.</text>
</comment>
<comment type="subunit">
    <text evidence="1">Part of the 50S ribosomal subunit.</text>
</comment>
<comment type="similarity">
    <text evidence="1">Belongs to the bacterial ribosomal protein bL31 family. Type A subfamily.</text>
</comment>
<name>RL31_LEPBL</name>
<reference key="1">
    <citation type="journal article" date="2006" name="Proc. Natl. Acad. Sci. U.S.A.">
        <title>Genome reduction in Leptospira borgpetersenii reflects limited transmission potential.</title>
        <authorList>
            <person name="Bulach D.M."/>
            <person name="Zuerner R.L."/>
            <person name="Wilson P."/>
            <person name="Seemann T."/>
            <person name="McGrath A."/>
            <person name="Cullen P.A."/>
            <person name="Davis J."/>
            <person name="Johnson M."/>
            <person name="Kuczek E."/>
            <person name="Alt D.P."/>
            <person name="Peterson-Burch B."/>
            <person name="Coppel R.L."/>
            <person name="Rood J.I."/>
            <person name="Davies J.K."/>
            <person name="Adler B."/>
        </authorList>
    </citation>
    <scope>NUCLEOTIDE SEQUENCE [LARGE SCALE GENOMIC DNA]</scope>
    <source>
        <strain>L550</strain>
    </source>
</reference>
<keyword id="KW-0687">Ribonucleoprotein</keyword>
<keyword id="KW-0689">Ribosomal protein</keyword>
<keyword id="KW-0694">RNA-binding</keyword>
<keyword id="KW-0699">rRNA-binding</keyword>
<organism>
    <name type="scientific">Leptospira borgpetersenii serovar Hardjo-bovis (strain L550)</name>
    <dbReference type="NCBI Taxonomy" id="355276"/>
    <lineage>
        <taxon>Bacteria</taxon>
        <taxon>Pseudomonadati</taxon>
        <taxon>Spirochaetota</taxon>
        <taxon>Spirochaetia</taxon>
        <taxon>Leptospirales</taxon>
        <taxon>Leptospiraceae</taxon>
        <taxon>Leptospira</taxon>
    </lineage>
</organism>
<proteinExistence type="inferred from homology"/>
<dbReference type="EMBL" id="CP000348">
    <property type="protein sequence ID" value="ABJ79740.1"/>
    <property type="molecule type" value="Genomic_DNA"/>
</dbReference>
<dbReference type="RefSeq" id="WP_000845534.1">
    <property type="nucleotide sequence ID" value="NC_008508.1"/>
</dbReference>
<dbReference type="SMR" id="Q04YV5"/>
<dbReference type="GeneID" id="61173326"/>
<dbReference type="KEGG" id="lbl:LBL_2352"/>
<dbReference type="HOGENOM" id="CLU_114306_4_0_12"/>
<dbReference type="GO" id="GO:1990904">
    <property type="term" value="C:ribonucleoprotein complex"/>
    <property type="evidence" value="ECO:0007669"/>
    <property type="project" value="UniProtKB-KW"/>
</dbReference>
<dbReference type="GO" id="GO:0005840">
    <property type="term" value="C:ribosome"/>
    <property type="evidence" value="ECO:0007669"/>
    <property type="project" value="UniProtKB-KW"/>
</dbReference>
<dbReference type="GO" id="GO:0019843">
    <property type="term" value="F:rRNA binding"/>
    <property type="evidence" value="ECO:0007669"/>
    <property type="project" value="UniProtKB-KW"/>
</dbReference>
<dbReference type="GO" id="GO:0003735">
    <property type="term" value="F:structural constituent of ribosome"/>
    <property type="evidence" value="ECO:0007669"/>
    <property type="project" value="InterPro"/>
</dbReference>
<dbReference type="GO" id="GO:0006412">
    <property type="term" value="P:translation"/>
    <property type="evidence" value="ECO:0007669"/>
    <property type="project" value="UniProtKB-UniRule"/>
</dbReference>
<dbReference type="Gene3D" id="4.10.830.30">
    <property type="entry name" value="Ribosomal protein L31"/>
    <property type="match status" value="1"/>
</dbReference>
<dbReference type="HAMAP" id="MF_00501">
    <property type="entry name" value="Ribosomal_bL31_1"/>
    <property type="match status" value="1"/>
</dbReference>
<dbReference type="InterPro" id="IPR034704">
    <property type="entry name" value="Ribosomal_bL28/bL31-like_sf"/>
</dbReference>
<dbReference type="InterPro" id="IPR002150">
    <property type="entry name" value="Ribosomal_bL31"/>
</dbReference>
<dbReference type="InterPro" id="IPR027491">
    <property type="entry name" value="Ribosomal_bL31_A"/>
</dbReference>
<dbReference type="InterPro" id="IPR042105">
    <property type="entry name" value="Ribosomal_bL31_sf"/>
</dbReference>
<dbReference type="NCBIfam" id="TIGR00105">
    <property type="entry name" value="L31"/>
    <property type="match status" value="1"/>
</dbReference>
<dbReference type="NCBIfam" id="NF000612">
    <property type="entry name" value="PRK00019.1"/>
    <property type="match status" value="1"/>
</dbReference>
<dbReference type="PANTHER" id="PTHR33280">
    <property type="entry name" value="50S RIBOSOMAL PROTEIN L31, CHLOROPLASTIC"/>
    <property type="match status" value="1"/>
</dbReference>
<dbReference type="PANTHER" id="PTHR33280:SF1">
    <property type="entry name" value="LARGE RIBOSOMAL SUBUNIT PROTEIN BL31C"/>
    <property type="match status" value="1"/>
</dbReference>
<dbReference type="Pfam" id="PF01197">
    <property type="entry name" value="Ribosomal_L31"/>
    <property type="match status" value="1"/>
</dbReference>
<dbReference type="PRINTS" id="PR01249">
    <property type="entry name" value="RIBOSOMALL31"/>
</dbReference>
<dbReference type="SUPFAM" id="SSF143800">
    <property type="entry name" value="L28p-like"/>
    <property type="match status" value="1"/>
</dbReference>
<dbReference type="PROSITE" id="PS01143">
    <property type="entry name" value="RIBOSOMAL_L31"/>
    <property type="match status" value="1"/>
</dbReference>